<keyword id="KW-0217">Developmental protein</keyword>
<keyword id="KW-0238">DNA-binding</keyword>
<keyword id="KW-0479">Metal-binding</keyword>
<keyword id="KW-0539">Nucleus</keyword>
<keyword id="KW-1185">Reference proteome</keyword>
<keyword id="KW-0804">Transcription</keyword>
<keyword id="KW-0805">Transcription regulation</keyword>
<keyword id="KW-0862">Zinc</keyword>
<keyword id="KW-0863">Zinc-finger</keyword>
<evidence type="ECO:0000250" key="1">
    <source>
        <dbReference type="UniProtKB" id="Q07802"/>
    </source>
</evidence>
<evidence type="ECO:0000255" key="2"/>
<evidence type="ECO:0000256" key="3">
    <source>
        <dbReference type="SAM" id="MobiDB-lite"/>
    </source>
</evidence>
<evidence type="ECO:0000269" key="4">
    <source>
    </source>
</evidence>
<evidence type="ECO:0000269" key="5">
    <source>
    </source>
</evidence>
<evidence type="ECO:0000269" key="6">
    <source>
    </source>
</evidence>
<evidence type="ECO:0000269" key="7">
    <source>
    </source>
</evidence>
<evidence type="ECO:0000305" key="8"/>
<comment type="function">
    <text evidence="5 6 7">Transcription factor (PubMed:28056346). Involved in motor neuron fate determination and maintenance, acting as an activator of gene expression in a subset of motor neurons (PubMed:18817768, PubMed:28056346). May act in concert with GFI1 homolog pag-3 in motor neuron fate determination (PubMed:18817768). Required to maintain the expression of transcriptional repressors bnc-1 and cfi-1, which play roles in the cell fate of motor neurons (PubMed:28056346). May play a role in the expression of proteins essential for axonal pathfinding and/or neuronal differentiation in both sensory and motor neurons (PubMed:9502737). Cooperates with jmjd-3.1 and wdr-5.1 to ensure robust transdifferentiation of the Y rectal cell to the PDA motor neuron during larval development (PubMed:25124442).</text>
</comment>
<comment type="subunit">
    <text evidence="4 5">May homodimerise (PubMed:18817768). Interacts with jmjd-3.1 (PubMed:25124442). May interact with GFI1 homolog pag-3 (PubMed:18817768).</text>
</comment>
<comment type="subcellular location">
    <subcellularLocation>
        <location evidence="8">Nucleus</location>
    </subcellularLocation>
</comment>
<comment type="developmental stage">
    <text evidence="4 7">Expressed in certain chemosensory neurons (ASI amphid neurons) throughout development and is also expressed transiently in developing motor neurons when these cells undergo axonal outgrowth (PubMed:9502737). Expressed in the VA and VB motor neurons during larval L1 and L2 stages, but not in the precursor cell that generates them (PubMed:18817768).</text>
</comment>
<comment type="disruption phenotype">
    <text evidence="7">Worms show defects in the axonal outgrowth of motor neurons, as well as defects in dauer formation, a process requiring chemosensory inputs.</text>
</comment>
<comment type="similarity">
    <text evidence="8">Belongs to the COE family.</text>
</comment>
<dbReference type="EMBL" id="AF052060">
    <property type="protein sequence ID" value="AAC06226.1"/>
    <property type="molecule type" value="mRNA"/>
</dbReference>
<dbReference type="EMBL" id="BX284606">
    <property type="protein sequence ID" value="CCO25892.1"/>
    <property type="molecule type" value="Genomic_DNA"/>
</dbReference>
<dbReference type="EMBL" id="Z81081">
    <property type="protein sequence ID" value="CCO25892.1"/>
    <property type="status" value="JOINED"/>
    <property type="molecule type" value="Genomic_DNA"/>
</dbReference>
<dbReference type="PIR" id="T22089">
    <property type="entry name" value="T22089"/>
</dbReference>
<dbReference type="PIR" id="T42991">
    <property type="entry name" value="T42991"/>
</dbReference>
<dbReference type="RefSeq" id="NP_510453.1">
    <property type="nucleotide sequence ID" value="NM_078052.5"/>
</dbReference>
<dbReference type="SMR" id="Q93705"/>
<dbReference type="BioGRID" id="46470">
    <property type="interactions" value="6"/>
</dbReference>
<dbReference type="DIP" id="DIP-61432N"/>
<dbReference type="FunCoup" id="Q93705">
    <property type="interactions" value="1040"/>
</dbReference>
<dbReference type="IntAct" id="Q93705">
    <property type="interactions" value="1"/>
</dbReference>
<dbReference type="STRING" id="6239.Y16B4A.1.1"/>
<dbReference type="PaxDb" id="6239-Y16B4A.1"/>
<dbReference type="EnsemblMetazoa" id="Y16B4A.1.1">
    <property type="protein sequence ID" value="Y16B4A.1.1"/>
    <property type="gene ID" value="WBGene00006743"/>
</dbReference>
<dbReference type="GeneID" id="181573"/>
<dbReference type="KEGG" id="cel:CELE_Y16B4A.1"/>
<dbReference type="UCSC" id="Y16B4A.1">
    <property type="organism name" value="c. elegans"/>
</dbReference>
<dbReference type="AGR" id="WB:WBGene00006743"/>
<dbReference type="CTD" id="181573"/>
<dbReference type="WormBase" id="Y16B4A.1">
    <property type="protein sequence ID" value="CE29366"/>
    <property type="gene ID" value="WBGene00006743"/>
    <property type="gene designation" value="unc-3"/>
</dbReference>
<dbReference type="eggNOG" id="KOG3836">
    <property type="taxonomic scope" value="Eukaryota"/>
</dbReference>
<dbReference type="GeneTree" id="ENSGT00950000182859"/>
<dbReference type="HOGENOM" id="CLU_016320_0_0_1"/>
<dbReference type="InParanoid" id="Q93705"/>
<dbReference type="OMA" id="FGSTTVW"/>
<dbReference type="OrthoDB" id="25246at2759"/>
<dbReference type="PhylomeDB" id="Q93705"/>
<dbReference type="PRO" id="PR:Q93705"/>
<dbReference type="Proteomes" id="UP000001940">
    <property type="component" value="Chromosome X"/>
</dbReference>
<dbReference type="Bgee" id="WBGene00006743">
    <property type="expression patterns" value="Expressed in pharyngeal muscle cell (C elegans) and 3 other cell types or tissues"/>
</dbReference>
<dbReference type="GO" id="GO:0005634">
    <property type="term" value="C:nucleus"/>
    <property type="evidence" value="ECO:0000314"/>
    <property type="project" value="WormBase"/>
</dbReference>
<dbReference type="GO" id="GO:0000981">
    <property type="term" value="F:DNA-binding transcription factor activity, RNA polymerase II-specific"/>
    <property type="evidence" value="ECO:0000318"/>
    <property type="project" value="GO_Central"/>
</dbReference>
<dbReference type="GO" id="GO:0035035">
    <property type="term" value="F:histone acetyltransferase binding"/>
    <property type="evidence" value="ECO:0000353"/>
    <property type="project" value="WormBase"/>
</dbReference>
<dbReference type="GO" id="GO:0042802">
    <property type="term" value="F:identical protein binding"/>
    <property type="evidence" value="ECO:0000314"/>
    <property type="project" value="WormBase"/>
</dbReference>
<dbReference type="GO" id="GO:0000978">
    <property type="term" value="F:RNA polymerase II cis-regulatory region sequence-specific DNA binding"/>
    <property type="evidence" value="ECO:0000318"/>
    <property type="project" value="GO_Central"/>
</dbReference>
<dbReference type="GO" id="GO:0000977">
    <property type="term" value="F:RNA polymerase II transcription regulatory region sequence-specific DNA binding"/>
    <property type="evidence" value="ECO:0000314"/>
    <property type="project" value="WormBase"/>
</dbReference>
<dbReference type="GO" id="GO:0008270">
    <property type="term" value="F:zinc ion binding"/>
    <property type="evidence" value="ECO:0007669"/>
    <property type="project" value="UniProtKB-KW"/>
</dbReference>
<dbReference type="GO" id="GO:0007411">
    <property type="term" value="P:axon guidance"/>
    <property type="evidence" value="ECO:0000315"/>
    <property type="project" value="UniProtKB"/>
</dbReference>
<dbReference type="GO" id="GO:0001708">
    <property type="term" value="P:cell fate specification"/>
    <property type="evidence" value="ECO:0000315"/>
    <property type="project" value="UniProtKB"/>
</dbReference>
<dbReference type="GO" id="GO:0040024">
    <property type="term" value="P:dauer larval development"/>
    <property type="evidence" value="ECO:0000316"/>
    <property type="project" value="WormBase"/>
</dbReference>
<dbReference type="GO" id="GO:0048665">
    <property type="term" value="P:neuron fate specification"/>
    <property type="evidence" value="ECO:0000316"/>
    <property type="project" value="UniProtKB"/>
</dbReference>
<dbReference type="GO" id="GO:0043065">
    <property type="term" value="P:positive regulation of apoptotic process"/>
    <property type="evidence" value="ECO:0000315"/>
    <property type="project" value="WormBase"/>
</dbReference>
<dbReference type="GO" id="GO:0045944">
    <property type="term" value="P:positive regulation of transcription by RNA polymerase II"/>
    <property type="evidence" value="ECO:0000315"/>
    <property type="project" value="UniProtKB"/>
</dbReference>
<dbReference type="GO" id="GO:0010975">
    <property type="term" value="P:regulation of neuron projection development"/>
    <property type="evidence" value="ECO:0000315"/>
    <property type="project" value="WormBase"/>
</dbReference>
<dbReference type="GO" id="GO:0006357">
    <property type="term" value="P:regulation of transcription by RNA polymerase II"/>
    <property type="evidence" value="ECO:0000318"/>
    <property type="project" value="GO_Central"/>
</dbReference>
<dbReference type="CDD" id="cd11606">
    <property type="entry name" value="COE_DBD"/>
    <property type="match status" value="1"/>
</dbReference>
<dbReference type="CDD" id="cd01175">
    <property type="entry name" value="IPT_COE"/>
    <property type="match status" value="1"/>
</dbReference>
<dbReference type="FunFam" id="1.10.287.4280:FF:000002">
    <property type="entry name" value="Transcription factor unc-3"/>
    <property type="match status" value="1"/>
</dbReference>
<dbReference type="FunFam" id="2.60.40.3180:FF:000007">
    <property type="entry name" value="Transcription factor unc-3"/>
    <property type="match status" value="1"/>
</dbReference>
<dbReference type="Gene3D" id="1.10.287.4280">
    <property type="match status" value="1"/>
</dbReference>
<dbReference type="Gene3D" id="2.60.40.10">
    <property type="entry name" value="Immunoglobulins"/>
    <property type="match status" value="1"/>
</dbReference>
<dbReference type="Gene3D" id="2.60.40.3180">
    <property type="entry name" value="Transcription factor COE1, DNA-binding domain"/>
    <property type="match status" value="1"/>
</dbReference>
<dbReference type="InterPro" id="IPR032200">
    <property type="entry name" value="COE_DBD"/>
</dbReference>
<dbReference type="InterPro" id="IPR038173">
    <property type="entry name" value="COE_DBD_sf"/>
</dbReference>
<dbReference type="InterPro" id="IPR032201">
    <property type="entry name" value="COE_HLH"/>
</dbReference>
<dbReference type="InterPro" id="IPR038006">
    <property type="entry name" value="COE_IPT"/>
</dbReference>
<dbReference type="InterPro" id="IPR013783">
    <property type="entry name" value="Ig-like_fold"/>
</dbReference>
<dbReference type="InterPro" id="IPR014756">
    <property type="entry name" value="Ig_E-set"/>
</dbReference>
<dbReference type="InterPro" id="IPR002909">
    <property type="entry name" value="IPT_dom"/>
</dbReference>
<dbReference type="InterPro" id="IPR003523">
    <property type="entry name" value="Transcription_factor_COE"/>
</dbReference>
<dbReference type="InterPro" id="IPR018350">
    <property type="entry name" value="Transcription_factor_COE_CS"/>
</dbReference>
<dbReference type="PANTHER" id="PTHR10747">
    <property type="entry name" value="TRANSCRIPTION FACTOR COE FAMILY MEMBER"/>
    <property type="match status" value="1"/>
</dbReference>
<dbReference type="Pfam" id="PF16422">
    <property type="entry name" value="COE1_DBD"/>
    <property type="match status" value="1"/>
</dbReference>
<dbReference type="Pfam" id="PF16423">
    <property type="entry name" value="COE1_HLH"/>
    <property type="match status" value="1"/>
</dbReference>
<dbReference type="Pfam" id="PF01833">
    <property type="entry name" value="TIG"/>
    <property type="match status" value="1"/>
</dbReference>
<dbReference type="SMART" id="SM00429">
    <property type="entry name" value="IPT"/>
    <property type="match status" value="1"/>
</dbReference>
<dbReference type="SUPFAM" id="SSF81296">
    <property type="entry name" value="E set domains"/>
    <property type="match status" value="1"/>
</dbReference>
<dbReference type="PROSITE" id="PS01345">
    <property type="entry name" value="COE"/>
    <property type="match status" value="1"/>
</dbReference>
<accession>Q93705</accession>
<accession>K8FE05</accession>
<accession>O61576</accession>
<proteinExistence type="evidence at protein level"/>
<reference key="1">
    <citation type="journal article" date="1998" name="Development">
        <title>unc-3, a gene required for axonal guidance in Caenorhabditis elegans, encodes a member of the O/E family of transcription factors.</title>
        <authorList>
            <person name="Prasad B.C."/>
            <person name="Ye B."/>
            <person name="Zackhary R."/>
            <person name="Schrader K."/>
            <person name="Seydoux G."/>
            <person name="Reed R.R."/>
        </authorList>
    </citation>
    <scope>NUCLEOTIDE SEQUENCE [MRNA]</scope>
    <scope>FUNCTION</scope>
    <scope>DEVELOPMENTAL STAGE</scope>
    <scope>DISRUPTION PHENOTYPE</scope>
    <source>
        <strain>Bristol N2</strain>
    </source>
</reference>
<reference key="2">
    <citation type="journal article" date="1998" name="Science">
        <title>Genome sequence of the nematode C. elegans: a platform for investigating biology.</title>
        <authorList>
            <consortium name="The C. elegans sequencing consortium"/>
        </authorList>
    </citation>
    <scope>NUCLEOTIDE SEQUENCE [LARGE SCALE GENOMIC DNA]</scope>
    <source>
        <strain>Bristol N2</strain>
    </source>
</reference>
<reference key="3">
    <citation type="journal article" date="2008" name="Dev. Biol.">
        <title>unc-3-dependent repression of specific motor neuron fates in Caenorhabditis elegans.</title>
        <authorList>
            <person name="Prasad B."/>
            <person name="Karakuzu O."/>
            <person name="Reed R.R."/>
            <person name="Cameron S."/>
        </authorList>
    </citation>
    <scope>FUNCTION</scope>
    <scope>SUBUNIT</scope>
    <scope>DEVELOPMENTAL STAGE</scope>
    <scope>INTERACTION WITH PAG-3</scope>
    <scope>MUTAGENESIS OF 309-TRP--SER-491</scope>
</reference>
<reference key="4">
    <citation type="journal article" date="2014" name="Science">
        <title>Sequential histone-modifying activities determine the robustness of transdifferentiation.</title>
        <authorList>
            <person name="Zuryn S."/>
            <person name="Ahier A."/>
            <person name="Portoso M."/>
            <person name="White E.R."/>
            <person name="Morin M.C."/>
            <person name="Margueron R."/>
            <person name="Jarriault S."/>
        </authorList>
    </citation>
    <scope>FUNCTION</scope>
    <scope>INTERACTION WITH JMJD-3.1</scope>
</reference>
<reference key="5">
    <citation type="journal article" date="2017" name="Neuron">
        <title>Diversification of C. elegans Motor Neuron Identity via Selective Effector Gene Repression.</title>
        <authorList>
            <person name="Kerk S.Y."/>
            <person name="Kratsios P."/>
            <person name="Hart M."/>
            <person name="Mourao R."/>
            <person name="Hobert O."/>
        </authorList>
    </citation>
    <scope>FUNCTION</scope>
    <scope>MUTAGENESIS OF 309-TRP--SER-491</scope>
</reference>
<gene>
    <name type="primary">unc-3</name>
    <name type="ORF">Y16B4A.1</name>
</gene>
<organism>
    <name type="scientific">Caenorhabditis elegans</name>
    <dbReference type="NCBI Taxonomy" id="6239"/>
    <lineage>
        <taxon>Eukaryota</taxon>
        <taxon>Metazoa</taxon>
        <taxon>Ecdysozoa</taxon>
        <taxon>Nematoda</taxon>
        <taxon>Chromadorea</taxon>
        <taxon>Rhabditida</taxon>
        <taxon>Rhabditina</taxon>
        <taxon>Rhabditomorpha</taxon>
        <taxon>Rhabditoidea</taxon>
        <taxon>Rhabditidae</taxon>
        <taxon>Peloderinae</taxon>
        <taxon>Caenorhabditis</taxon>
    </lineage>
</organism>
<name>UNC3_CAEEL</name>
<protein>
    <recommendedName>
        <fullName>Transcription factor unc-3</fullName>
    </recommendedName>
    <alternativeName>
        <fullName>Uncoordinated protein 3</fullName>
        <shortName>CEO/E</shortName>
    </alternativeName>
</protein>
<feature type="chain" id="PRO_0000107824" description="Transcription factor unc-3">
    <location>
        <begin position="1"/>
        <end position="491"/>
    </location>
</feature>
<feature type="domain" description="IPT/TIG" evidence="2">
    <location>
        <begin position="269"/>
        <end position="355"/>
    </location>
</feature>
<feature type="zinc finger region" description="C5-type" evidence="2">
    <location>
        <begin position="154"/>
        <end position="173"/>
    </location>
</feature>
<feature type="region of interest" description="Interaction with DNA" evidence="1">
    <location>
        <begin position="66"/>
        <end position="69"/>
    </location>
</feature>
<feature type="region of interest" description="Interaction with DNA" evidence="1">
    <location>
        <begin position="200"/>
        <end position="207"/>
    </location>
</feature>
<feature type="region of interest" description="Interaction with DNA" evidence="1">
    <location>
        <begin position="239"/>
        <end position="242"/>
    </location>
</feature>
<feature type="region of interest" description="Disordered" evidence="3">
    <location>
        <begin position="240"/>
        <end position="261"/>
    </location>
</feature>
<feature type="site" description="Interaction with DNA" evidence="1">
    <location>
        <position position="166"/>
    </location>
</feature>
<feature type="site" description="Interaction with DNA" evidence="1">
    <location>
        <position position="175"/>
    </location>
</feature>
<feature type="mutagenesis site" description="In e151 and n3412; drastically reduces expression of acetylcholine receptor genes acr-5 and acr-16. In a bnc-1 mutant background, abolishes expression of the BMP-like protein unc-129 in DA and DB motor neurons (MNs); furthermore, ectopic expression of unc-129 in VA and VB MNs is also lost. In a mab-9 mutant background, ectopic expression of Degenerin del-1 gene in DA and DB MNs is abolished. Increased number of VC and VC-like neurons in the ventral nerve cords of adult hermaphrodites." evidence="4 6">
    <location>
        <begin position="309"/>
        <end position="491"/>
    </location>
</feature>
<sequence length="491" mass="55001">MSLTAPLRAGQMNFYDEPYNPVLNLHIQPSVKDENQRSTWPIIDTSNTSTQIARAHFEKHPPNNLRKSNFFHFVIALYDRNSQPIEVERTQFAGFVEKEKEVDGQDTRNGIHYRLSLMFQNGIRSEHDLFVRLIDSSTKQAITYEGQDKNPEMCRVLLTHEVMCSRCCEKKSCGNRNETPSDPVIIDRFFLKFFLKCNQNCLKNAGNPRDMRRFQVVLCSSARIDGPLLAVSDNMFVHNNSKHGRRTKRTDASDDSEYSESAELPSSVPVIKALFPSEGWIQGGTQVVLIGENFFEGLQVAFGTASPNWGESVQLISPHAIRVTTPPKHSAGPVDVTLQYKSKTYSRGTPLRFSYITLAEPGIEYGFQRLQKLLPKYPGDPERLPKDQILKRAAELAEALYNRTSTESLSSYYHTQFDATSDYAARTHTSPRSTLPYGAGPPALSSAVYQTSYPTVNATPAANFLNTQTGFATFGAVNPFAATLQSSSRLS</sequence>